<reference key="1">
    <citation type="journal article" date="2012" name="BMC Genomics">
        <title>Comparative genomics and transcriptomics of lineages I, II, and III strains of Listeria monocytogenes.</title>
        <authorList>
            <person name="Hain T."/>
            <person name="Ghai R."/>
            <person name="Billion A."/>
            <person name="Kuenne C.T."/>
            <person name="Steinweg C."/>
            <person name="Izar B."/>
            <person name="Mohamed W."/>
            <person name="Mraheil M."/>
            <person name="Domann E."/>
            <person name="Schaffrath S."/>
            <person name="Karst U."/>
            <person name="Goesmann A."/>
            <person name="Oehm S."/>
            <person name="Puhler A."/>
            <person name="Merkl R."/>
            <person name="Vorwerk S."/>
            <person name="Glaser P."/>
            <person name="Garrido P."/>
            <person name="Rusniok C."/>
            <person name="Buchrieser C."/>
            <person name="Goebel W."/>
            <person name="Chakraborty T."/>
        </authorList>
    </citation>
    <scope>NUCLEOTIDE SEQUENCE [LARGE SCALE GENOMIC DNA]</scope>
    <source>
        <strain>CLIP80459</strain>
    </source>
</reference>
<protein>
    <recommendedName>
        <fullName evidence="1">Segregation and condensation protein B</fullName>
    </recommendedName>
</protein>
<keyword id="KW-0131">Cell cycle</keyword>
<keyword id="KW-0132">Cell division</keyword>
<keyword id="KW-0159">Chromosome partition</keyword>
<keyword id="KW-0963">Cytoplasm</keyword>
<gene>
    <name evidence="1" type="primary">scpB</name>
    <name type="ordered locus">Lm4b_01969</name>
</gene>
<name>SCPB_LISMC</name>
<feature type="chain" id="PRO_1000215943" description="Segregation and condensation protein B">
    <location>
        <begin position="1"/>
        <end position="198"/>
    </location>
</feature>
<feature type="region of interest" description="Disordered" evidence="2">
    <location>
        <begin position="168"/>
        <end position="198"/>
    </location>
</feature>
<proteinExistence type="inferred from homology"/>
<comment type="function">
    <text evidence="1">Participates in chromosomal partition during cell division. May act via the formation of a condensin-like complex containing Smc and ScpA that pull DNA away from mid-cell into both cell halves.</text>
</comment>
<comment type="subunit">
    <text evidence="1">Homodimer. Homodimerization may be required to stabilize the binding of ScpA to the Smc head domains. Component of a cohesin-like complex composed of ScpA, ScpB and the Smc homodimer, in which ScpA and ScpB bind to the head domain of Smc. The presence of the three proteins is required for the association of the complex with DNA.</text>
</comment>
<comment type="subcellular location">
    <subcellularLocation>
        <location evidence="1">Cytoplasm</location>
    </subcellularLocation>
    <text evidence="1">Associated with two foci at the outer edges of the nucleoid region in young cells, and at four foci within both cell halves in older cells.</text>
</comment>
<comment type="similarity">
    <text evidence="1">Belongs to the ScpB family.</text>
</comment>
<evidence type="ECO:0000255" key="1">
    <source>
        <dbReference type="HAMAP-Rule" id="MF_01804"/>
    </source>
</evidence>
<evidence type="ECO:0000256" key="2">
    <source>
        <dbReference type="SAM" id="MobiDB-lite"/>
    </source>
</evidence>
<dbReference type="EMBL" id="FM242711">
    <property type="protein sequence ID" value="CAS05726.1"/>
    <property type="molecule type" value="Genomic_DNA"/>
</dbReference>
<dbReference type="RefSeq" id="WP_003725939.1">
    <property type="nucleotide sequence ID" value="NC_012488.1"/>
</dbReference>
<dbReference type="SMR" id="C1KWQ1"/>
<dbReference type="KEGG" id="lmc:Lm4b_01969"/>
<dbReference type="HOGENOM" id="CLU_045647_5_3_9"/>
<dbReference type="GO" id="GO:0005737">
    <property type="term" value="C:cytoplasm"/>
    <property type="evidence" value="ECO:0007669"/>
    <property type="project" value="UniProtKB-SubCell"/>
</dbReference>
<dbReference type="GO" id="GO:0051301">
    <property type="term" value="P:cell division"/>
    <property type="evidence" value="ECO:0007669"/>
    <property type="project" value="UniProtKB-KW"/>
</dbReference>
<dbReference type="GO" id="GO:0051304">
    <property type="term" value="P:chromosome separation"/>
    <property type="evidence" value="ECO:0007669"/>
    <property type="project" value="InterPro"/>
</dbReference>
<dbReference type="GO" id="GO:0006260">
    <property type="term" value="P:DNA replication"/>
    <property type="evidence" value="ECO:0007669"/>
    <property type="project" value="UniProtKB-UniRule"/>
</dbReference>
<dbReference type="Gene3D" id="1.10.10.10">
    <property type="entry name" value="Winged helix-like DNA-binding domain superfamily/Winged helix DNA-binding domain"/>
    <property type="match status" value="2"/>
</dbReference>
<dbReference type="HAMAP" id="MF_01804">
    <property type="entry name" value="ScpB"/>
    <property type="match status" value="1"/>
</dbReference>
<dbReference type="InterPro" id="IPR005234">
    <property type="entry name" value="ScpB_csome_segregation"/>
</dbReference>
<dbReference type="InterPro" id="IPR036388">
    <property type="entry name" value="WH-like_DNA-bd_sf"/>
</dbReference>
<dbReference type="InterPro" id="IPR036390">
    <property type="entry name" value="WH_DNA-bd_sf"/>
</dbReference>
<dbReference type="NCBIfam" id="TIGR00281">
    <property type="entry name" value="SMC-Scp complex subunit ScpB"/>
    <property type="match status" value="1"/>
</dbReference>
<dbReference type="PANTHER" id="PTHR34298">
    <property type="entry name" value="SEGREGATION AND CONDENSATION PROTEIN B"/>
    <property type="match status" value="1"/>
</dbReference>
<dbReference type="PANTHER" id="PTHR34298:SF2">
    <property type="entry name" value="SEGREGATION AND CONDENSATION PROTEIN B"/>
    <property type="match status" value="1"/>
</dbReference>
<dbReference type="Pfam" id="PF04079">
    <property type="entry name" value="SMC_ScpB"/>
    <property type="match status" value="1"/>
</dbReference>
<dbReference type="PIRSF" id="PIRSF019345">
    <property type="entry name" value="ScpB"/>
    <property type="match status" value="1"/>
</dbReference>
<dbReference type="SUPFAM" id="SSF46785">
    <property type="entry name" value="Winged helix' DNA-binding domain"/>
    <property type="match status" value="2"/>
</dbReference>
<sequence length="198" mass="21884">MNREEQLGVLESLLFAAGDAGLSTEQLTEVMEITHIEALNLLELLSDRYNGSADRGLILLELAGTFQLATKKAHAEFLRKLVEVPSNTVLSQASLETLAIIAYRQPVTRMEVDEVRGVQTDGPIRTLVAKGLVTDKGRVDGAGRAKLYVTTSEFLDAFGLNSLEDLPKLADPATDEPDQNEMDLFFDRFNQSKEQEEE</sequence>
<organism>
    <name type="scientific">Listeria monocytogenes serotype 4b (strain CLIP80459)</name>
    <dbReference type="NCBI Taxonomy" id="568819"/>
    <lineage>
        <taxon>Bacteria</taxon>
        <taxon>Bacillati</taxon>
        <taxon>Bacillota</taxon>
        <taxon>Bacilli</taxon>
        <taxon>Bacillales</taxon>
        <taxon>Listeriaceae</taxon>
        <taxon>Listeria</taxon>
    </lineage>
</organism>
<accession>C1KWQ1</accession>